<evidence type="ECO:0000250" key="1"/>
<evidence type="ECO:0000255" key="2"/>
<evidence type="ECO:0000255" key="3">
    <source>
        <dbReference type="PROSITE-ProRule" id="PRU00989"/>
    </source>
</evidence>
<evidence type="ECO:0000305" key="4"/>
<comment type="function">
    <text evidence="1">GTP-binding protein that is not required for the biosynthesis of Mo-molybdopterin guanine dinucleotide (Mo-MGD) cofactor, and not necessary for the formation of active molybdoenzymes using this form of molybdenum cofactor. May act as an adapter protein to achieve the efficient biosynthesis and utilization of MGD. Displays a weak intrinsic GTPase activity (By similarity).</text>
</comment>
<comment type="cofactor">
    <cofactor evidence="3">
        <name>[4Fe-4S] cluster</name>
        <dbReference type="ChEBI" id="CHEBI:49883"/>
    </cofactor>
    <text evidence="3">Binds 1 [4Fe-4S] cluster.</text>
</comment>
<comment type="similarity">
    <text evidence="4">Belongs to the MobB family.</text>
</comment>
<protein>
    <recommendedName>
        <fullName>Putative molybdopterin-guanine dinucleotide biosynthesis adapter protein</fullName>
        <shortName>MGD biosynthesis adapter protein</shortName>
    </recommendedName>
    <alternativeName>
        <fullName>Molybdenum cofactor biosynthesis adapter protein</fullName>
        <shortName>Moco biosynthesis adapter protein</shortName>
    </alternativeName>
</protein>
<dbReference type="EMBL" id="L77117">
    <property type="protein sequence ID" value="AAB99333.1"/>
    <property type="molecule type" value="Genomic_DNA"/>
</dbReference>
<dbReference type="PIR" id="C64465">
    <property type="entry name" value="C64465"/>
</dbReference>
<dbReference type="RefSeq" id="WP_010870841.1">
    <property type="nucleotide sequence ID" value="NC_000909.1"/>
</dbReference>
<dbReference type="SMR" id="Q58720"/>
<dbReference type="FunCoup" id="Q58720">
    <property type="interactions" value="1"/>
</dbReference>
<dbReference type="STRING" id="243232.MJ_1324"/>
<dbReference type="PaxDb" id="243232-MJ_1324"/>
<dbReference type="EnsemblBacteria" id="AAB99333">
    <property type="protein sequence ID" value="AAB99333"/>
    <property type="gene ID" value="MJ_1324"/>
</dbReference>
<dbReference type="GeneID" id="1452226"/>
<dbReference type="KEGG" id="mja:MJ_1324"/>
<dbReference type="eggNOG" id="arCOG00532">
    <property type="taxonomic scope" value="Archaea"/>
</dbReference>
<dbReference type="HOGENOM" id="CLU_068199_0_1_2"/>
<dbReference type="InParanoid" id="Q58720"/>
<dbReference type="OrthoDB" id="9014at2157"/>
<dbReference type="PhylomeDB" id="Q58720"/>
<dbReference type="Proteomes" id="UP000000805">
    <property type="component" value="Chromosome"/>
</dbReference>
<dbReference type="GO" id="GO:0051539">
    <property type="term" value="F:4 iron, 4 sulfur cluster binding"/>
    <property type="evidence" value="ECO:0007669"/>
    <property type="project" value="UniProtKB-KW"/>
</dbReference>
<dbReference type="GO" id="GO:0005525">
    <property type="term" value="F:GTP binding"/>
    <property type="evidence" value="ECO:0000318"/>
    <property type="project" value="GO_Central"/>
</dbReference>
<dbReference type="GO" id="GO:0046872">
    <property type="term" value="F:metal ion binding"/>
    <property type="evidence" value="ECO:0007669"/>
    <property type="project" value="UniProtKB-KW"/>
</dbReference>
<dbReference type="GO" id="GO:0006777">
    <property type="term" value="P:Mo-molybdopterin cofactor biosynthetic process"/>
    <property type="evidence" value="ECO:0007669"/>
    <property type="project" value="UniProtKB-KW"/>
</dbReference>
<dbReference type="Gene3D" id="3.40.50.300">
    <property type="entry name" value="P-loop containing nucleotide triphosphate hydrolases"/>
    <property type="match status" value="1"/>
</dbReference>
<dbReference type="InterPro" id="IPR007202">
    <property type="entry name" value="4Fe-4S_dom"/>
</dbReference>
<dbReference type="InterPro" id="IPR052539">
    <property type="entry name" value="MGD_biosynthesis_adapter"/>
</dbReference>
<dbReference type="InterPro" id="IPR004435">
    <property type="entry name" value="MobB_dom"/>
</dbReference>
<dbReference type="InterPro" id="IPR027417">
    <property type="entry name" value="P-loop_NTPase"/>
</dbReference>
<dbReference type="NCBIfam" id="TIGR00176">
    <property type="entry name" value="mobB"/>
    <property type="match status" value="1"/>
</dbReference>
<dbReference type="NCBIfam" id="NF011062">
    <property type="entry name" value="PRK14494.1-1"/>
    <property type="match status" value="1"/>
</dbReference>
<dbReference type="PANTHER" id="PTHR40072:SF1">
    <property type="entry name" value="MOLYBDOPTERIN-GUANINE DINUCLEOTIDE BIOSYNTHESIS ADAPTER PROTEIN"/>
    <property type="match status" value="1"/>
</dbReference>
<dbReference type="PANTHER" id="PTHR40072">
    <property type="entry name" value="MOLYBDOPTERIN-GUANINE DINUCLEOTIDE BIOSYNTHESIS ADAPTER PROTEIN-RELATED"/>
    <property type="match status" value="1"/>
</dbReference>
<dbReference type="Pfam" id="PF04060">
    <property type="entry name" value="FeS"/>
    <property type="match status" value="1"/>
</dbReference>
<dbReference type="Pfam" id="PF03205">
    <property type="entry name" value="MobB"/>
    <property type="match status" value="1"/>
</dbReference>
<dbReference type="SUPFAM" id="SSF52540">
    <property type="entry name" value="P-loop containing nucleoside triphosphate hydrolases"/>
    <property type="match status" value="1"/>
</dbReference>
<dbReference type="PROSITE" id="PS51656">
    <property type="entry name" value="4FE4S"/>
    <property type="match status" value="1"/>
</dbReference>
<proteinExistence type="inferred from homology"/>
<gene>
    <name type="primary">mobB</name>
    <name type="ordered locus">MJ1324</name>
</gene>
<organism>
    <name type="scientific">Methanocaldococcus jannaschii (strain ATCC 43067 / DSM 2661 / JAL-1 / JCM 10045 / NBRC 100440)</name>
    <name type="common">Methanococcus jannaschii</name>
    <dbReference type="NCBI Taxonomy" id="243232"/>
    <lineage>
        <taxon>Archaea</taxon>
        <taxon>Methanobacteriati</taxon>
        <taxon>Methanobacteriota</taxon>
        <taxon>Methanomada group</taxon>
        <taxon>Methanococci</taxon>
        <taxon>Methanococcales</taxon>
        <taxon>Methanocaldococcaceae</taxon>
        <taxon>Methanocaldococcus</taxon>
    </lineage>
</organism>
<name>MOBB_METJA</name>
<keyword id="KW-0004">4Fe-4S</keyword>
<keyword id="KW-0342">GTP-binding</keyword>
<keyword id="KW-0408">Iron</keyword>
<keyword id="KW-0411">Iron-sulfur</keyword>
<keyword id="KW-0479">Metal-binding</keyword>
<keyword id="KW-0501">Molybdenum cofactor biosynthesis</keyword>
<keyword id="KW-0547">Nucleotide-binding</keyword>
<keyword id="KW-1185">Reference proteome</keyword>
<feature type="chain" id="PRO_0000107276" description="Putative molybdopterin-guanine dinucleotide biosynthesis adapter protein">
    <location>
        <begin position="1"/>
        <end position="234"/>
    </location>
</feature>
<feature type="domain" description="4Fe-4S" evidence="3">
    <location>
        <begin position="134"/>
        <end position="196"/>
    </location>
</feature>
<feature type="binding site" evidence="1">
    <location>
        <begin position="11"/>
        <end position="15"/>
    </location>
    <ligand>
        <name>GTP</name>
        <dbReference type="ChEBI" id="CHEBI:37565"/>
    </ligand>
</feature>
<feature type="binding site" evidence="2">
    <location>
        <begin position="42"/>
        <end position="45"/>
    </location>
    <ligand>
        <name>GTP</name>
        <dbReference type="ChEBI" id="CHEBI:37565"/>
    </ligand>
</feature>
<feature type="binding site" evidence="2">
    <location>
        <begin position="86"/>
        <end position="89"/>
    </location>
    <ligand>
        <name>GTP</name>
        <dbReference type="ChEBI" id="CHEBI:37565"/>
    </ligand>
</feature>
<feature type="binding site" evidence="3">
    <location>
        <position position="155"/>
    </location>
    <ligand>
        <name>[4Fe-4S] cluster</name>
        <dbReference type="ChEBI" id="CHEBI:49883"/>
    </ligand>
</feature>
<feature type="binding site" evidence="3">
    <location>
        <position position="158"/>
    </location>
    <ligand>
        <name>[4Fe-4S] cluster</name>
        <dbReference type="ChEBI" id="CHEBI:49883"/>
    </ligand>
</feature>
<feature type="binding site" evidence="3">
    <location>
        <position position="162"/>
    </location>
    <ligand>
        <name>[4Fe-4S] cluster</name>
        <dbReference type="ChEBI" id="CHEBI:49883"/>
    </ligand>
</feature>
<feature type="binding site" evidence="3">
    <location>
        <position position="179"/>
    </location>
    <ligand>
        <name>[4Fe-4S] cluster</name>
        <dbReference type="ChEBI" id="CHEBI:49883"/>
    </ligand>
</feature>
<sequence>MRVIGVIGYKDSGKTTLIEEILKHSDKKIAVIKHTKEDVEVDKKGTDTYRLSNAGAKITVLATDSKTVFFTDRMDLENILSVLSDYNIDFVIIEGFKEALKRLNIPKIVMLKDKDGSDLIDDHTAMIIEDYNYNIDDVLKVIYEKAVVPTMNLNCGHCGYNCRTFVKAVVKGEARWDDCVLAKGIKIIVDGKIIPAVPFVSKIVGSTIKAMIETLKGVDNPKTIKVEIDVSKLK</sequence>
<accession>Q58720</accession>
<reference key="1">
    <citation type="journal article" date="1996" name="Science">
        <title>Complete genome sequence of the methanogenic archaeon, Methanococcus jannaschii.</title>
        <authorList>
            <person name="Bult C.J."/>
            <person name="White O."/>
            <person name="Olsen G.J."/>
            <person name="Zhou L."/>
            <person name="Fleischmann R.D."/>
            <person name="Sutton G.G."/>
            <person name="Blake J.A."/>
            <person name="FitzGerald L.M."/>
            <person name="Clayton R.A."/>
            <person name="Gocayne J.D."/>
            <person name="Kerlavage A.R."/>
            <person name="Dougherty B.A."/>
            <person name="Tomb J.-F."/>
            <person name="Adams M.D."/>
            <person name="Reich C.I."/>
            <person name="Overbeek R."/>
            <person name="Kirkness E.F."/>
            <person name="Weinstock K.G."/>
            <person name="Merrick J.M."/>
            <person name="Glodek A."/>
            <person name="Scott J.L."/>
            <person name="Geoghagen N.S.M."/>
            <person name="Weidman J.F."/>
            <person name="Fuhrmann J.L."/>
            <person name="Nguyen D."/>
            <person name="Utterback T.R."/>
            <person name="Kelley J.M."/>
            <person name="Peterson J.D."/>
            <person name="Sadow P.W."/>
            <person name="Hanna M.C."/>
            <person name="Cotton M.D."/>
            <person name="Roberts K.M."/>
            <person name="Hurst M.A."/>
            <person name="Kaine B.P."/>
            <person name="Borodovsky M."/>
            <person name="Klenk H.-P."/>
            <person name="Fraser C.M."/>
            <person name="Smith H.O."/>
            <person name="Woese C.R."/>
            <person name="Venter J.C."/>
        </authorList>
    </citation>
    <scope>NUCLEOTIDE SEQUENCE [LARGE SCALE GENOMIC DNA]</scope>
    <source>
        <strain>ATCC 43067 / DSM 2661 / JAL-1 / JCM 10045 / NBRC 100440</strain>
    </source>
</reference>